<comment type="function">
    <text evidence="1">Catalyzes the dehydration of the S-form of NAD(P)HX at the expense of ADP, which is converted to AMP. Together with NAD(P)HX epimerase, which catalyzes the epimerization of the S- and R-forms, the enzyme allows the repair of both epimers of NAD(P)HX, a damaged form of NAD(P)H that is a result of enzymatic or heat-dependent hydration.</text>
</comment>
<comment type="catalytic activity">
    <reaction evidence="1">
        <text>(6S)-NADHX + ADP = AMP + phosphate + NADH + H(+)</text>
        <dbReference type="Rhea" id="RHEA:32223"/>
        <dbReference type="ChEBI" id="CHEBI:15378"/>
        <dbReference type="ChEBI" id="CHEBI:43474"/>
        <dbReference type="ChEBI" id="CHEBI:57945"/>
        <dbReference type="ChEBI" id="CHEBI:64074"/>
        <dbReference type="ChEBI" id="CHEBI:456215"/>
        <dbReference type="ChEBI" id="CHEBI:456216"/>
        <dbReference type="EC" id="4.2.1.136"/>
    </reaction>
</comment>
<comment type="catalytic activity">
    <reaction evidence="1">
        <text>(6S)-NADPHX + ADP = AMP + phosphate + NADPH + H(+)</text>
        <dbReference type="Rhea" id="RHEA:32235"/>
        <dbReference type="ChEBI" id="CHEBI:15378"/>
        <dbReference type="ChEBI" id="CHEBI:43474"/>
        <dbReference type="ChEBI" id="CHEBI:57783"/>
        <dbReference type="ChEBI" id="CHEBI:64076"/>
        <dbReference type="ChEBI" id="CHEBI:456215"/>
        <dbReference type="ChEBI" id="CHEBI:456216"/>
        <dbReference type="EC" id="4.2.1.136"/>
    </reaction>
</comment>
<comment type="cofactor">
    <cofactor evidence="1">
        <name>Mg(2+)</name>
        <dbReference type="ChEBI" id="CHEBI:18420"/>
    </cofactor>
</comment>
<comment type="subunit">
    <text evidence="1">Homotetramer.</text>
</comment>
<comment type="similarity">
    <text evidence="1">Belongs to the NnrD/CARKD family.</text>
</comment>
<comment type="sequence caution" evidence="2">
    <conflict type="erroneous initiation">
        <sequence resource="EMBL-CDS" id="ABK76899"/>
    </conflict>
    <text>Extended N-terminus.</text>
</comment>
<reference key="1">
    <citation type="journal article" date="2006" name="Proc. Natl. Acad. Sci. U.S.A.">
        <title>Genomic analysis of the uncultivated marine crenarchaeote Cenarchaeum symbiosum.</title>
        <authorList>
            <person name="Hallam S.J."/>
            <person name="Konstantinidis K.T."/>
            <person name="Putnam N."/>
            <person name="Schleper C."/>
            <person name="Watanabe Y."/>
            <person name="Sugahara J."/>
            <person name="Preston C."/>
            <person name="de la Torre J."/>
            <person name="Richardson P.M."/>
            <person name="DeLong E.F."/>
        </authorList>
    </citation>
    <scope>NUCLEOTIDE SEQUENCE [LARGE SCALE GENOMIC DNA]</scope>
    <source>
        <strain>A</strain>
    </source>
</reference>
<name>NNRD_CENSY</name>
<evidence type="ECO:0000255" key="1">
    <source>
        <dbReference type="HAMAP-Rule" id="MF_01965"/>
    </source>
</evidence>
<evidence type="ECO:0000305" key="2"/>
<dbReference type="EC" id="4.2.1.136" evidence="1"/>
<dbReference type="EMBL" id="DP000238">
    <property type="protein sequence ID" value="ABK76899.1"/>
    <property type="status" value="ALT_INIT"/>
    <property type="molecule type" value="Genomic_DNA"/>
</dbReference>
<dbReference type="SMR" id="A0RU82"/>
<dbReference type="STRING" id="414004.CENSYa_0257"/>
<dbReference type="EnsemblBacteria" id="ABK76899">
    <property type="protein sequence ID" value="ABK76899"/>
    <property type="gene ID" value="CENSYa_0257"/>
</dbReference>
<dbReference type="KEGG" id="csy:CENSYa_0257"/>
<dbReference type="PATRIC" id="fig|414004.10.peg.224"/>
<dbReference type="HOGENOM" id="CLU_024853_2_2_2"/>
<dbReference type="Proteomes" id="UP000000758">
    <property type="component" value="Chromosome"/>
</dbReference>
<dbReference type="GO" id="GO:0052855">
    <property type="term" value="F:ADP-dependent NAD(P)H-hydrate dehydratase activity"/>
    <property type="evidence" value="ECO:0007669"/>
    <property type="project" value="UniProtKB-UniRule"/>
</dbReference>
<dbReference type="GO" id="GO:0005524">
    <property type="term" value="F:ATP binding"/>
    <property type="evidence" value="ECO:0007669"/>
    <property type="project" value="UniProtKB-KW"/>
</dbReference>
<dbReference type="GO" id="GO:0110051">
    <property type="term" value="P:metabolite repair"/>
    <property type="evidence" value="ECO:0007669"/>
    <property type="project" value="TreeGrafter"/>
</dbReference>
<dbReference type="GO" id="GO:0046496">
    <property type="term" value="P:nicotinamide nucleotide metabolic process"/>
    <property type="evidence" value="ECO:0007669"/>
    <property type="project" value="UniProtKB-UniRule"/>
</dbReference>
<dbReference type="CDD" id="cd01171">
    <property type="entry name" value="YXKO-related"/>
    <property type="match status" value="1"/>
</dbReference>
<dbReference type="Gene3D" id="3.40.1190.20">
    <property type="match status" value="1"/>
</dbReference>
<dbReference type="HAMAP" id="MF_01965">
    <property type="entry name" value="NADHX_dehydratase"/>
    <property type="match status" value="1"/>
</dbReference>
<dbReference type="InterPro" id="IPR000631">
    <property type="entry name" value="CARKD"/>
</dbReference>
<dbReference type="InterPro" id="IPR029056">
    <property type="entry name" value="Ribokinase-like"/>
</dbReference>
<dbReference type="NCBIfam" id="TIGR00196">
    <property type="entry name" value="yjeF_cterm"/>
    <property type="match status" value="1"/>
</dbReference>
<dbReference type="PANTHER" id="PTHR12592:SF0">
    <property type="entry name" value="ATP-DEPENDENT (S)-NAD(P)H-HYDRATE DEHYDRATASE"/>
    <property type="match status" value="1"/>
</dbReference>
<dbReference type="PANTHER" id="PTHR12592">
    <property type="entry name" value="ATP-DEPENDENT (S)-NAD(P)H-HYDRATE DEHYDRATASE FAMILY MEMBER"/>
    <property type="match status" value="1"/>
</dbReference>
<dbReference type="Pfam" id="PF01256">
    <property type="entry name" value="Carb_kinase"/>
    <property type="match status" value="1"/>
</dbReference>
<dbReference type="SUPFAM" id="SSF53613">
    <property type="entry name" value="Ribokinase-like"/>
    <property type="match status" value="1"/>
</dbReference>
<dbReference type="PROSITE" id="PS51383">
    <property type="entry name" value="YJEF_C_3"/>
    <property type="match status" value="1"/>
</dbReference>
<feature type="chain" id="PRO_0000416152" description="ADP-dependent (S)-NAD(P)H-hydrate dehydratase">
    <location>
        <begin position="1"/>
        <end position="287"/>
    </location>
</feature>
<feature type="domain" description="YjeF C-terminal" evidence="1">
    <location>
        <begin position="7"/>
        <end position="283"/>
    </location>
</feature>
<feature type="binding site" evidence="1">
    <location>
        <position position="42"/>
    </location>
    <ligand>
        <name>(6S)-NADPHX</name>
        <dbReference type="ChEBI" id="CHEBI:64076"/>
    </ligand>
</feature>
<feature type="binding site" evidence="1">
    <location>
        <position position="159"/>
    </location>
    <ligand>
        <name>(6S)-NADPHX</name>
        <dbReference type="ChEBI" id="CHEBI:64076"/>
    </ligand>
</feature>
<feature type="binding site" evidence="1">
    <location>
        <begin position="196"/>
        <end position="200"/>
    </location>
    <ligand>
        <name>AMP</name>
        <dbReference type="ChEBI" id="CHEBI:456215"/>
    </ligand>
</feature>
<feature type="binding site" evidence="1">
    <location>
        <position position="224"/>
    </location>
    <ligand>
        <name>AMP</name>
        <dbReference type="ChEBI" id="CHEBI:456215"/>
    </ligand>
</feature>
<feature type="binding site" evidence="1">
    <location>
        <position position="225"/>
    </location>
    <ligand>
        <name>(6S)-NADPHX</name>
        <dbReference type="ChEBI" id="CHEBI:64076"/>
    </ligand>
</feature>
<organism>
    <name type="scientific">Cenarchaeum symbiosum (strain A)</name>
    <dbReference type="NCBI Taxonomy" id="414004"/>
    <lineage>
        <taxon>Archaea</taxon>
        <taxon>Nitrososphaerota</taxon>
        <taxon>Candidatus Cenarchaeales</taxon>
        <taxon>Candidatus Cenarchaeaceae</taxon>
        <taxon>Candidatus Cenarchaeum</taxon>
    </lineage>
</organism>
<accession>A0RU82</accession>
<proteinExistence type="inferred from homology"/>
<sequence length="287" mass="30027">MAARMIGEDDVRKFVPSRRRDSRKGENGKVLVVGGSYIYHGAPIFSSVAALRSGCDLVYTAVPKINAPATRAASPSMIVIPLADQKLTRGAARKLAGQIPTGLDSATIGMGLAIAERSALKVLVVALVDMDVRISLDAGALVREILGDISGKNCLVTPHAGEFKRLFGESPPADIEGRASMVERLAQEHGITILLKGPTDVISDGNRTLLNDRGAPAMTVGGTGDVLSGIAAGILARNRSPLESAAAAAYINGLAGEAAQEMHGLHITAMDLCELLPSVMKPFDRLE</sequence>
<protein>
    <recommendedName>
        <fullName evidence="1">ADP-dependent (S)-NAD(P)H-hydrate dehydratase</fullName>
        <ecNumber evidence="1">4.2.1.136</ecNumber>
    </recommendedName>
    <alternativeName>
        <fullName evidence="1">ADP-dependent NAD(P)HX dehydratase</fullName>
    </alternativeName>
</protein>
<gene>
    <name evidence="1" type="primary">nnrD</name>
    <name type="ordered locus">CENSYa_0257</name>
</gene>
<keyword id="KW-0067">ATP-binding</keyword>
<keyword id="KW-0456">Lyase</keyword>
<keyword id="KW-0520">NAD</keyword>
<keyword id="KW-0521">NADP</keyword>
<keyword id="KW-0547">Nucleotide-binding</keyword>
<keyword id="KW-1185">Reference proteome</keyword>